<proteinExistence type="inferred from homology"/>
<comment type="subcellular location">
    <subcellularLocation>
        <location evidence="1">Cell membrane</location>
        <topology evidence="1">Multi-pass membrane protein</topology>
    </subcellularLocation>
</comment>
<comment type="similarity">
    <text evidence="1">Belongs to the chloride channel (TC 2.A.49) family.</text>
</comment>
<name>YFEO_ECOK1</name>
<protein>
    <recommendedName>
        <fullName evidence="1">Putative ion-transport protein YfeO</fullName>
    </recommendedName>
</protein>
<organism>
    <name type="scientific">Escherichia coli O1:K1 / APEC</name>
    <dbReference type="NCBI Taxonomy" id="405955"/>
    <lineage>
        <taxon>Bacteria</taxon>
        <taxon>Pseudomonadati</taxon>
        <taxon>Pseudomonadota</taxon>
        <taxon>Gammaproteobacteria</taxon>
        <taxon>Enterobacterales</taxon>
        <taxon>Enterobacteriaceae</taxon>
        <taxon>Escherichia</taxon>
    </lineage>
</organism>
<gene>
    <name evidence="1" type="primary">yfeO</name>
    <name type="ordered locus">Ecok1_23110</name>
    <name type="ORF">APECO1_4148</name>
</gene>
<reference key="1">
    <citation type="journal article" date="2007" name="J. Bacteriol.">
        <title>The genome sequence of avian pathogenic Escherichia coli strain O1:K1:H7 shares strong similarities with human extraintestinal pathogenic E. coli genomes.</title>
        <authorList>
            <person name="Johnson T.J."/>
            <person name="Kariyawasam S."/>
            <person name="Wannemuehler Y."/>
            <person name="Mangiamele P."/>
            <person name="Johnson S.J."/>
            <person name="Doetkott C."/>
            <person name="Skyberg J.A."/>
            <person name="Lynne A.M."/>
            <person name="Johnson J.R."/>
            <person name="Nolan L.K."/>
        </authorList>
    </citation>
    <scope>NUCLEOTIDE SEQUENCE [LARGE SCALE GENOMIC DNA]</scope>
</reference>
<feature type="chain" id="PRO_0000298431" description="Putative ion-transport protein YfeO">
    <location>
        <begin position="1"/>
        <end position="418"/>
    </location>
</feature>
<feature type="transmembrane region" description="Helical" evidence="1">
    <location>
        <begin position="10"/>
        <end position="30"/>
    </location>
</feature>
<feature type="transmembrane region" description="Helical" evidence="1">
    <location>
        <begin position="54"/>
        <end position="74"/>
    </location>
</feature>
<feature type="transmembrane region" description="Helical" evidence="1">
    <location>
        <begin position="99"/>
        <end position="119"/>
    </location>
</feature>
<feature type="transmembrane region" description="Helical" evidence="1">
    <location>
        <begin position="120"/>
        <end position="140"/>
    </location>
</feature>
<feature type="transmembrane region" description="Helical" evidence="1">
    <location>
        <begin position="149"/>
        <end position="169"/>
    </location>
</feature>
<feature type="transmembrane region" description="Helical" evidence="1">
    <location>
        <begin position="186"/>
        <end position="206"/>
    </location>
</feature>
<feature type="transmembrane region" description="Helical" evidence="1">
    <location>
        <begin position="223"/>
        <end position="243"/>
    </location>
</feature>
<feature type="transmembrane region" description="Helical" evidence="1">
    <location>
        <begin position="258"/>
        <end position="278"/>
    </location>
</feature>
<feature type="transmembrane region" description="Helical" evidence="1">
    <location>
        <begin position="300"/>
        <end position="320"/>
    </location>
</feature>
<feature type="transmembrane region" description="Helical" evidence="1">
    <location>
        <begin position="322"/>
        <end position="342"/>
    </location>
</feature>
<feature type="transmembrane region" description="Helical" evidence="1">
    <location>
        <begin position="343"/>
        <end position="363"/>
    </location>
</feature>
<feature type="transmembrane region" description="Helical" evidence="1">
    <location>
        <begin position="371"/>
        <end position="391"/>
    </location>
</feature>
<sequence length="418" mass="43664">MLHPRARTMLLLSLPAVAIGIASSLILIMVMKIASVLQNLLWQRLPGTLGIAQDSPLWIIGVLTLTGIAVGLVIRFSQGHAGPDPACEPLIGAPVPPSALPGLIVALILGLAGGVSLGPEHPIMTVNIALAVAIGARLLPRVNRMEWTILASAGTIGALFGTPVAAALIFSQTLNGSNEVPLWDRLFAPLMAAAAGALTTGLFFHPHFSLPIAHYGQMEMTDILSGAIVAAIAIAAGMVAVWCLPRLHAMMHQMKNPVFVLGIGGLILGILGVIGGPVSLFKGLDEMQQMVANQAFSTSDYFLLAVIKLAALVVAAASGFRGGRIFPAVFVGVALGLMLHEHVPAVPAAITVSCAILGIVLVVTRDGWLSLFMAAVVVPNTTLLPLLCIVMLPAWLLLAGKPMMMVNRQKQQPPHDNV</sequence>
<dbReference type="EMBL" id="CP000468">
    <property type="protein sequence ID" value="ABJ01805.1"/>
    <property type="molecule type" value="Genomic_DNA"/>
</dbReference>
<dbReference type="RefSeq" id="WP_000903099.1">
    <property type="nucleotide sequence ID" value="NZ_CADILS010000022.1"/>
</dbReference>
<dbReference type="SMR" id="A1ADR5"/>
<dbReference type="KEGG" id="ecv:APECO1_4148"/>
<dbReference type="HOGENOM" id="CLU_053130_0_0_6"/>
<dbReference type="Proteomes" id="UP000008216">
    <property type="component" value="Chromosome"/>
</dbReference>
<dbReference type="GO" id="GO:0005886">
    <property type="term" value="C:plasma membrane"/>
    <property type="evidence" value="ECO:0007669"/>
    <property type="project" value="UniProtKB-SubCell"/>
</dbReference>
<dbReference type="GO" id="GO:0015108">
    <property type="term" value="F:chloride transmembrane transporter activity"/>
    <property type="evidence" value="ECO:0007669"/>
    <property type="project" value="InterPro"/>
</dbReference>
<dbReference type="GO" id="GO:0005216">
    <property type="term" value="F:monoatomic ion channel activity"/>
    <property type="evidence" value="ECO:0007669"/>
    <property type="project" value="UniProtKB-UniRule"/>
</dbReference>
<dbReference type="CDD" id="cd00400">
    <property type="entry name" value="Voltage_gated_ClC"/>
    <property type="match status" value="1"/>
</dbReference>
<dbReference type="FunFam" id="1.10.3080.10:FF:000007">
    <property type="entry name" value="Putative ion-transport protein YfeO"/>
    <property type="match status" value="1"/>
</dbReference>
<dbReference type="Gene3D" id="1.10.3080.10">
    <property type="entry name" value="Clc chloride channel"/>
    <property type="match status" value="1"/>
</dbReference>
<dbReference type="HAMAP" id="MF_01115">
    <property type="entry name" value="CLC_YfeO"/>
    <property type="match status" value="1"/>
</dbReference>
<dbReference type="InterPro" id="IPR022969">
    <property type="entry name" value="Chloride_channel_YfeO"/>
</dbReference>
<dbReference type="InterPro" id="IPR014743">
    <property type="entry name" value="Cl-channel_core"/>
</dbReference>
<dbReference type="InterPro" id="IPR001807">
    <property type="entry name" value="ClC"/>
</dbReference>
<dbReference type="InterPro" id="IPR050368">
    <property type="entry name" value="ClC-type_chloride_channel"/>
</dbReference>
<dbReference type="NCBIfam" id="NF002971">
    <property type="entry name" value="PRK03655.1"/>
    <property type="match status" value="1"/>
</dbReference>
<dbReference type="PANTHER" id="PTHR43427">
    <property type="entry name" value="CHLORIDE CHANNEL PROTEIN CLC-E"/>
    <property type="match status" value="1"/>
</dbReference>
<dbReference type="PANTHER" id="PTHR43427:SF9">
    <property type="entry name" value="ION-TRANSPORT PROTEIN YFEO-RELATED"/>
    <property type="match status" value="1"/>
</dbReference>
<dbReference type="Pfam" id="PF00654">
    <property type="entry name" value="Voltage_CLC"/>
    <property type="match status" value="1"/>
</dbReference>
<dbReference type="PRINTS" id="PR00762">
    <property type="entry name" value="CLCHANNEL"/>
</dbReference>
<dbReference type="SUPFAM" id="SSF81340">
    <property type="entry name" value="Clc chloride channel"/>
    <property type="match status" value="1"/>
</dbReference>
<evidence type="ECO:0000255" key="1">
    <source>
        <dbReference type="HAMAP-Rule" id="MF_01115"/>
    </source>
</evidence>
<accession>A1ADR5</accession>
<keyword id="KW-1003">Cell membrane</keyword>
<keyword id="KW-0407">Ion channel</keyword>
<keyword id="KW-0406">Ion transport</keyword>
<keyword id="KW-0472">Membrane</keyword>
<keyword id="KW-1185">Reference proteome</keyword>
<keyword id="KW-0812">Transmembrane</keyword>
<keyword id="KW-1133">Transmembrane helix</keyword>
<keyword id="KW-0813">Transport</keyword>